<feature type="chain" id="PRO_0000356826" description="Keratin, type II cytoskeletal 5">
    <location>
        <begin position="1"/>
        <end position="592"/>
    </location>
</feature>
<feature type="domain" description="IF rod" evidence="4">
    <location>
        <begin position="170"/>
        <end position="483"/>
    </location>
</feature>
<feature type="region of interest" description="Head">
    <location>
        <begin position="1"/>
        <end position="169"/>
    </location>
</feature>
<feature type="region of interest" description="Disordered" evidence="5">
    <location>
        <begin position="1"/>
        <end position="20"/>
    </location>
</feature>
<feature type="region of interest" description="Coil 1A">
    <location>
        <begin position="170"/>
        <end position="205"/>
    </location>
</feature>
<feature type="region of interest" description="Linker 1">
    <location>
        <begin position="206"/>
        <end position="224"/>
    </location>
</feature>
<feature type="region of interest" description="Coil 1B">
    <location>
        <begin position="225"/>
        <end position="317"/>
    </location>
</feature>
<feature type="region of interest" description="Linker 12">
    <location>
        <begin position="318"/>
        <end position="340"/>
    </location>
</feature>
<feature type="region of interest" description="Coil 2">
    <location>
        <begin position="341"/>
        <end position="479"/>
    </location>
</feature>
<feature type="region of interest" description="Tail">
    <location>
        <begin position="480"/>
        <end position="592"/>
    </location>
</feature>
<feature type="region of interest" description="Disordered" evidence="5">
    <location>
        <begin position="568"/>
        <end position="592"/>
    </location>
</feature>
<feature type="compositionally biased region" description="Low complexity" evidence="5">
    <location>
        <begin position="1"/>
        <end position="18"/>
    </location>
</feature>
<feature type="compositionally biased region" description="Low complexity" evidence="5">
    <location>
        <begin position="574"/>
        <end position="592"/>
    </location>
</feature>
<feature type="site" description="Stutter">
    <location>
        <position position="421"/>
    </location>
</feature>
<feature type="modified residue" description="Phosphoserine" evidence="2">
    <location>
        <position position="5"/>
    </location>
</feature>
<feature type="modified residue" description="Phosphoserine" evidence="2">
    <location>
        <position position="8"/>
    </location>
</feature>
<feature type="modified residue" description="Phosphoserine" evidence="3">
    <location>
        <position position="16"/>
    </location>
</feature>
<feature type="modified residue" description="Phosphoserine" evidence="3">
    <location>
        <position position="21"/>
    </location>
</feature>
<feature type="modified residue" description="Phosphothreonine; by CDK1" evidence="3">
    <location>
        <position position="24"/>
    </location>
</feature>
<feature type="modified residue" description="Phosphoserine" evidence="3">
    <location>
        <position position="26"/>
    </location>
</feature>
<feature type="modified residue" description="Phosphoserine" evidence="2">
    <location>
        <position position="36"/>
    </location>
</feature>
<feature type="modified residue" description="Phosphoserine" evidence="3">
    <location>
        <position position="50"/>
    </location>
</feature>
<feature type="modified residue" description="Phosphoserine" evidence="3">
    <location>
        <position position="64"/>
    </location>
</feature>
<feature type="modified residue" description="Phosphoserine" evidence="2">
    <location>
        <position position="71"/>
    </location>
</feature>
<feature type="modified residue" description="Phosphoserine" evidence="2">
    <location>
        <position position="75"/>
    </location>
</feature>
<feature type="modified residue" description="Phosphoserine" evidence="2">
    <location>
        <position position="82"/>
    </location>
</feature>
<feature type="modified residue" description="Phosphothreonine; by CDK1" evidence="3">
    <location>
        <position position="153"/>
    </location>
</feature>
<feature type="modified residue" description="Phosphothreonine; by AURKB" evidence="3">
    <location>
        <position position="168"/>
    </location>
</feature>
<sequence length="592" mass="62538">MSRQSSVSFRSGGSRSFSTASAITPSVSRTSFTSVSRSGGGGGGGFGRVSLGGACGVGGYGSRSLYNLGGSKWISISTSGGSFRNRFGAGAGAGGGYGFGGGAGSGFGFGGGAGGGFGLGGGAGFGGGYGGPGFPVCPPGGIQEVTVNQSLLTPLNLQIDPSIQRVRTEEREQIKTLNNKFASFIDKVRFLEQQNKVLDTKWTLLQEQGTKTVRQNLEPLFEQYINNLRRQLDSIVGERGRLDSELRNMQDLVEDFKNKYEDEINKRTTAENEFVMLKKDVDAAYMNKVELEAKVDALMDEINFMKMFFDAELSQMQTHVSDTSVVLSMDNNRNLDLDSIIAEVKAQYEEIANRSRTEAESWYQTKYEELQQTAGRHGDDLRNTKHEISEMNRMIQRLRAEIDNVKKQCANLQNAIADAEQRGELALKDARNKLAELEEALQKAKQDMARLLREYQELMNTKLALDVEIATYRKLLEGEECRLSGEGVGPVNISVVTSSVSSGYGSGSGYGGGLGGGLGGGLGGSLAGGGSGSYYSSSSGGVGLGGGLSVGGSGFSASSGRGLGVGFGSGGGSSSSVKFVSTTSSSRKSFKS</sequence>
<comment type="function">
    <text evidence="3">Required for the formation of keratin intermediate filaments in the basal epidermis and maintenance of the skin barrier in response to mechanical stress (By similarity). Regulates the recruitment of Langerhans cells to the epidermis, potentially by modulation of the abundance of macrophage chemotactic cytokines, macrophage inflammatory cytokines and CTNND1 localization in keratinocytes (By similarity).</text>
</comment>
<comment type="subunit">
    <text evidence="1 3">Heterodimer of a type I and a type II keratin. Heterodimer with type I keratin KRT25 leading to the formation of keratin intermediate filament (KIF) network (By similarity). Forms a heterodimer (via 2B domains) with KRT14 (via 2B domains) (By similarity). Interacts with TCHP (By similarity). Interacts with EPPK1 (By similarity). Interacts with AMELX (By similarity). Interacts with PKP1 (via N-terminus) and PKP2 (By similarity).</text>
</comment>
<comment type="subcellular location">
    <subcellularLocation>
        <location evidence="3">Cytoplasm</location>
    </subcellularLocation>
</comment>
<comment type="PTM">
    <text evidence="3">Phosphorylated by CDK1, AURKB and Rho-kinase, phosphorylation is regulated by the cell cycle (By similarity). Thr-24 phosphorylation, mediated by CDK1, peaks during prometaphase or metaphase cells with phosphorylated filamentous structures evident throughout the cytoplasm during early mitosis (By similarity). CDK1 phosphorylates Thr-24 in mitotic cells at the site of injury (By similarity).</text>
</comment>
<comment type="PTM">
    <text evidence="3">O-glycosylated.</text>
</comment>
<comment type="miscellaneous">
    <text>There are two types of cytoskeletal and microfibrillar keratin: I (acidic; 40-55 kDa) and II (neutral to basic; 56-70 kDa).</text>
</comment>
<comment type="similarity">
    <text evidence="4">Belongs to the intermediate filament family.</text>
</comment>
<protein>
    <recommendedName>
        <fullName>Keratin, type II cytoskeletal 5</fullName>
    </recommendedName>
    <alternativeName>
        <fullName>Cytokeratin-5</fullName>
        <shortName>CK-5</shortName>
    </alternativeName>
    <alternativeName>
        <fullName>Keratin-5</fullName>
        <shortName>K5</shortName>
    </alternativeName>
    <alternativeName>
        <fullName>Type-II keratin Kb5</fullName>
    </alternativeName>
</protein>
<name>K2C5_PANTR</name>
<dbReference type="EMBL" id="AB222156">
    <property type="protein sequence ID" value="BAF62401.1"/>
    <property type="molecule type" value="mRNA"/>
</dbReference>
<dbReference type="RefSeq" id="NP_001266996.1">
    <property type="nucleotide sequence ID" value="NM_001280067.1"/>
</dbReference>
<dbReference type="SMR" id="A5A6M8"/>
<dbReference type="FunCoup" id="A5A6M8">
    <property type="interactions" value="352"/>
</dbReference>
<dbReference type="STRING" id="9598.ENSPTRP00000008493"/>
<dbReference type="GeneID" id="100615215"/>
<dbReference type="KEGG" id="ptr:100615215"/>
<dbReference type="CTD" id="3852"/>
<dbReference type="InParanoid" id="A5A6M8"/>
<dbReference type="OrthoDB" id="16575at9604"/>
<dbReference type="Proteomes" id="UP000002277">
    <property type="component" value="Unplaced"/>
</dbReference>
<dbReference type="GO" id="GO:0005737">
    <property type="term" value="C:cytoplasm"/>
    <property type="evidence" value="ECO:0000250"/>
    <property type="project" value="UniProtKB"/>
</dbReference>
<dbReference type="GO" id="GO:0005829">
    <property type="term" value="C:cytosol"/>
    <property type="evidence" value="ECO:0007669"/>
    <property type="project" value="UniProtKB-ARBA"/>
</dbReference>
<dbReference type="GO" id="GO:0045095">
    <property type="term" value="C:keratin filament"/>
    <property type="evidence" value="ECO:0000318"/>
    <property type="project" value="GO_Central"/>
</dbReference>
<dbReference type="GO" id="GO:0030280">
    <property type="term" value="F:structural constituent of skin epidermis"/>
    <property type="evidence" value="ECO:0000318"/>
    <property type="project" value="GO_Central"/>
</dbReference>
<dbReference type="GO" id="GO:0045109">
    <property type="term" value="P:intermediate filament organization"/>
    <property type="evidence" value="ECO:0000318"/>
    <property type="project" value="GO_Central"/>
</dbReference>
<dbReference type="GO" id="GO:0045107">
    <property type="term" value="P:intermediate filament polymerization"/>
    <property type="evidence" value="ECO:0000250"/>
    <property type="project" value="UniProtKB"/>
</dbReference>
<dbReference type="GO" id="GO:0031424">
    <property type="term" value="P:keratinization"/>
    <property type="evidence" value="ECO:0000318"/>
    <property type="project" value="GO_Central"/>
</dbReference>
<dbReference type="GO" id="GO:0030334">
    <property type="term" value="P:regulation of cell migration"/>
    <property type="evidence" value="ECO:0000250"/>
    <property type="project" value="UniProtKB"/>
</dbReference>
<dbReference type="GO" id="GO:0032880">
    <property type="term" value="P:regulation of protein localization"/>
    <property type="evidence" value="ECO:0000250"/>
    <property type="project" value="UniProtKB"/>
</dbReference>
<dbReference type="GO" id="GO:0009612">
    <property type="term" value="P:response to mechanical stimulus"/>
    <property type="evidence" value="ECO:0000250"/>
    <property type="project" value="UniProtKB"/>
</dbReference>
<dbReference type="FunFam" id="1.20.5.1160:FF:000001">
    <property type="entry name" value="Keratin type II"/>
    <property type="match status" value="1"/>
</dbReference>
<dbReference type="FunFam" id="1.20.5.170:FF:000004">
    <property type="entry name" value="Keratin, type II cytoskeletal 5"/>
    <property type="match status" value="1"/>
</dbReference>
<dbReference type="FunFam" id="1.20.5.500:FF:000001">
    <property type="entry name" value="Type II keratin 23"/>
    <property type="match status" value="1"/>
</dbReference>
<dbReference type="Gene3D" id="1.20.5.170">
    <property type="match status" value="1"/>
</dbReference>
<dbReference type="Gene3D" id="1.20.5.500">
    <property type="entry name" value="Single helix bin"/>
    <property type="match status" value="1"/>
</dbReference>
<dbReference type="Gene3D" id="1.20.5.1160">
    <property type="entry name" value="Vasodilator-stimulated phosphoprotein"/>
    <property type="match status" value="1"/>
</dbReference>
<dbReference type="InterPro" id="IPR018039">
    <property type="entry name" value="IF_conserved"/>
</dbReference>
<dbReference type="InterPro" id="IPR039008">
    <property type="entry name" value="IF_rod_dom"/>
</dbReference>
<dbReference type="InterPro" id="IPR032444">
    <property type="entry name" value="Keratin_2_head"/>
</dbReference>
<dbReference type="InterPro" id="IPR003054">
    <property type="entry name" value="Keratin_II"/>
</dbReference>
<dbReference type="PANTHER" id="PTHR45616">
    <property type="entry name" value="GATA-TYPE DOMAIN-CONTAINING PROTEIN"/>
    <property type="match status" value="1"/>
</dbReference>
<dbReference type="PANTHER" id="PTHR45616:SF32">
    <property type="entry name" value="KERATIN, TYPE II CYTOSKELETAL 5"/>
    <property type="match status" value="1"/>
</dbReference>
<dbReference type="Pfam" id="PF00038">
    <property type="entry name" value="Filament"/>
    <property type="match status" value="1"/>
</dbReference>
<dbReference type="Pfam" id="PF16208">
    <property type="entry name" value="Keratin_2_head"/>
    <property type="match status" value="1"/>
</dbReference>
<dbReference type="PRINTS" id="PR01276">
    <property type="entry name" value="TYPE2KERATIN"/>
</dbReference>
<dbReference type="SMART" id="SM01391">
    <property type="entry name" value="Filament"/>
    <property type="match status" value="1"/>
</dbReference>
<dbReference type="SUPFAM" id="SSF64593">
    <property type="entry name" value="Intermediate filament protein, coiled coil region"/>
    <property type="match status" value="3"/>
</dbReference>
<dbReference type="PROSITE" id="PS00226">
    <property type="entry name" value="IF_ROD_1"/>
    <property type="match status" value="1"/>
</dbReference>
<dbReference type="PROSITE" id="PS51842">
    <property type="entry name" value="IF_ROD_2"/>
    <property type="match status" value="1"/>
</dbReference>
<keyword id="KW-0175">Coiled coil</keyword>
<keyword id="KW-0963">Cytoplasm</keyword>
<keyword id="KW-0403">Intermediate filament</keyword>
<keyword id="KW-0416">Keratin</keyword>
<keyword id="KW-0597">Phosphoprotein</keyword>
<keyword id="KW-1185">Reference proteome</keyword>
<gene>
    <name type="primary">KRT5</name>
</gene>
<evidence type="ECO:0000250" key="1">
    <source>
        <dbReference type="UniProtKB" id="P13647"/>
    </source>
</evidence>
<evidence type="ECO:0000250" key="2">
    <source>
        <dbReference type="UniProtKB" id="Q6P6Q2"/>
    </source>
</evidence>
<evidence type="ECO:0000250" key="3">
    <source>
        <dbReference type="UniProtKB" id="Q922U2"/>
    </source>
</evidence>
<evidence type="ECO:0000255" key="4">
    <source>
        <dbReference type="PROSITE-ProRule" id="PRU01188"/>
    </source>
</evidence>
<evidence type="ECO:0000256" key="5">
    <source>
        <dbReference type="SAM" id="MobiDB-lite"/>
    </source>
</evidence>
<proteinExistence type="evidence at transcript level"/>
<accession>A5A6M8</accession>
<organism>
    <name type="scientific">Pan troglodytes</name>
    <name type="common">Chimpanzee</name>
    <dbReference type="NCBI Taxonomy" id="9598"/>
    <lineage>
        <taxon>Eukaryota</taxon>
        <taxon>Metazoa</taxon>
        <taxon>Chordata</taxon>
        <taxon>Craniata</taxon>
        <taxon>Vertebrata</taxon>
        <taxon>Euteleostomi</taxon>
        <taxon>Mammalia</taxon>
        <taxon>Eutheria</taxon>
        <taxon>Euarchontoglires</taxon>
        <taxon>Primates</taxon>
        <taxon>Haplorrhini</taxon>
        <taxon>Catarrhini</taxon>
        <taxon>Hominidae</taxon>
        <taxon>Pan</taxon>
    </lineage>
</organism>
<reference key="1">
    <citation type="journal article" date="2007" name="Gene">
        <title>Mapping of chimpanzee full-length cDNAs onto the human genome unveils large potential divergence of the transcriptome.</title>
        <authorList>
            <person name="Sakate R."/>
            <person name="Suto Y."/>
            <person name="Imanishi T."/>
            <person name="Tanoue T."/>
            <person name="Hida M."/>
            <person name="Hayasaka I."/>
            <person name="Kusuda J."/>
            <person name="Gojobori T."/>
            <person name="Hashimoto K."/>
            <person name="Hirai M."/>
        </authorList>
    </citation>
    <scope>NUCLEOTIDE SEQUENCE [MRNA]</scope>
    <source>
        <tissue>Skin</tissue>
    </source>
</reference>